<name>RUTB_AZOC5</name>
<organism>
    <name type="scientific">Azorhizobium caulinodans (strain ATCC 43989 / DSM 5975 / JCM 20966 / LMG 6465 / NBRC 14845 / NCIMB 13405 / ORS 571)</name>
    <dbReference type="NCBI Taxonomy" id="438753"/>
    <lineage>
        <taxon>Bacteria</taxon>
        <taxon>Pseudomonadati</taxon>
        <taxon>Pseudomonadota</taxon>
        <taxon>Alphaproteobacteria</taxon>
        <taxon>Hyphomicrobiales</taxon>
        <taxon>Xanthobacteraceae</taxon>
        <taxon>Azorhizobium</taxon>
    </lineage>
</organism>
<sequence length="227" mass="24689">MLPARPEPLSVAVEETAVVVVDMQNAYASPGGYLDIAGFDISGAKAAISAIAETVEAARAAGVTVIYFQNGWDKDYVEAGGPGSPNWHKSNALKTMRKKPELQGQLLAKGGWDYALVDQLAPQPGDIVVPKPRYSGFFNSQFDSILRARGIRNLVFCGIATNVCVESTLRDGFHLEYFGILLEDATHQAGPEYVQKAAIYNVETFFGWVSTVADFRRAFAQIPPKED</sequence>
<feature type="chain" id="PRO_0000402648" description="Ureidoacrylate amidohydrolase RutB">
    <location>
        <begin position="1"/>
        <end position="227"/>
    </location>
</feature>
<feature type="active site" description="Proton acceptor" evidence="1">
    <location>
        <position position="22"/>
    </location>
</feature>
<feature type="active site" evidence="1">
    <location>
        <position position="131"/>
    </location>
</feature>
<feature type="active site" description="Nucleophile" evidence="1">
    <location>
        <position position="164"/>
    </location>
</feature>
<dbReference type="EC" id="3.5.1.110" evidence="1"/>
<dbReference type="EMBL" id="AP009384">
    <property type="protein sequence ID" value="BAF88491.1"/>
    <property type="molecule type" value="Genomic_DNA"/>
</dbReference>
<dbReference type="SMR" id="A8IAC9"/>
<dbReference type="STRING" id="438753.AZC_2493"/>
<dbReference type="KEGG" id="azc:AZC_2493"/>
<dbReference type="eggNOG" id="COG1335">
    <property type="taxonomic scope" value="Bacteria"/>
</dbReference>
<dbReference type="HOGENOM" id="CLU_068979_8_0_5"/>
<dbReference type="Proteomes" id="UP000000270">
    <property type="component" value="Chromosome"/>
</dbReference>
<dbReference type="GO" id="GO:0016811">
    <property type="term" value="F:hydrolase activity, acting on carbon-nitrogen (but not peptide) bonds, in linear amides"/>
    <property type="evidence" value="ECO:0007669"/>
    <property type="project" value="UniProtKB-UniRule"/>
</dbReference>
<dbReference type="GO" id="GO:0019740">
    <property type="term" value="P:nitrogen utilization"/>
    <property type="evidence" value="ECO:0007669"/>
    <property type="project" value="UniProtKB-UniRule"/>
</dbReference>
<dbReference type="GO" id="GO:0006212">
    <property type="term" value="P:uracil catabolic process"/>
    <property type="evidence" value="ECO:0007669"/>
    <property type="project" value="UniProtKB-UniRule"/>
</dbReference>
<dbReference type="CDD" id="cd00431">
    <property type="entry name" value="cysteine_hydrolases"/>
    <property type="match status" value="1"/>
</dbReference>
<dbReference type="Gene3D" id="3.40.50.850">
    <property type="entry name" value="Isochorismatase-like"/>
    <property type="match status" value="1"/>
</dbReference>
<dbReference type="HAMAP" id="MF_00830">
    <property type="entry name" value="RutB"/>
    <property type="match status" value="1"/>
</dbReference>
<dbReference type="InterPro" id="IPR000868">
    <property type="entry name" value="Isochorismatase-like_dom"/>
</dbReference>
<dbReference type="InterPro" id="IPR050272">
    <property type="entry name" value="Isochorismatase-like_hydrls"/>
</dbReference>
<dbReference type="InterPro" id="IPR036380">
    <property type="entry name" value="Isochorismatase-like_sf"/>
</dbReference>
<dbReference type="InterPro" id="IPR019916">
    <property type="entry name" value="RutB"/>
</dbReference>
<dbReference type="NCBIfam" id="TIGR03614">
    <property type="entry name" value="RutB"/>
    <property type="match status" value="1"/>
</dbReference>
<dbReference type="PANTHER" id="PTHR43540:SF6">
    <property type="entry name" value="ISOCHORISMATASE-LIKE DOMAIN-CONTAINING PROTEIN"/>
    <property type="match status" value="1"/>
</dbReference>
<dbReference type="PANTHER" id="PTHR43540">
    <property type="entry name" value="PEROXYUREIDOACRYLATE/UREIDOACRYLATE AMIDOHYDROLASE-RELATED"/>
    <property type="match status" value="1"/>
</dbReference>
<dbReference type="Pfam" id="PF00857">
    <property type="entry name" value="Isochorismatase"/>
    <property type="match status" value="1"/>
</dbReference>
<dbReference type="SUPFAM" id="SSF52499">
    <property type="entry name" value="Isochorismatase-like hydrolases"/>
    <property type="match status" value="1"/>
</dbReference>
<keyword id="KW-0378">Hydrolase</keyword>
<keyword id="KW-1185">Reference proteome</keyword>
<protein>
    <recommendedName>
        <fullName evidence="1">Ureidoacrylate amidohydrolase RutB</fullName>
        <ecNumber evidence="1">3.5.1.110</ecNumber>
    </recommendedName>
</protein>
<gene>
    <name evidence="1" type="primary">rutB</name>
    <name type="ordered locus">AZC_2493</name>
</gene>
<reference key="1">
    <citation type="submission" date="2007-04" db="EMBL/GenBank/DDBJ databases">
        <title>Complete genome sequence of the nitrogen-fixing bacterium Azorhizobium caulinodans ORS571.</title>
        <authorList>
            <person name="Lee K.B."/>
            <person name="Backer P.D."/>
            <person name="Aono T."/>
            <person name="Liu C.T."/>
            <person name="Suzuki S."/>
            <person name="Suzuki T."/>
            <person name="Kaneko T."/>
            <person name="Yamada M."/>
            <person name="Tabata S."/>
            <person name="Kupfer D.M."/>
            <person name="Najar F.Z."/>
            <person name="Wiley G.B."/>
            <person name="Roe B."/>
            <person name="Binnewies T."/>
            <person name="Ussery D."/>
            <person name="Vereecke D."/>
            <person name="Gevers D."/>
            <person name="Holsters M."/>
            <person name="Oyaizu H."/>
        </authorList>
    </citation>
    <scope>NUCLEOTIDE SEQUENCE [LARGE SCALE GENOMIC DNA]</scope>
    <source>
        <strain>ATCC 43989 / DSM 5975 / JCM 20966 / LMG 6465 / NBRC 14845 / NCIMB 13405 / ORS 571</strain>
    </source>
</reference>
<comment type="function">
    <text evidence="1">Hydrolyzes ureidoacrylate to form aminoacrylate and carbamate. The carbamate hydrolyzes spontaneously, thereby releasing one of the nitrogen atoms of the pyrimidine ring as ammonia and one of its carbon atoms as CO2.</text>
</comment>
<comment type="catalytic activity">
    <reaction evidence="1">
        <text>(Z)-3-ureidoacrylate + H2O + H(+) = (Z)-3-aminoacrylate + NH4(+) + CO2</text>
        <dbReference type="Rhea" id="RHEA:42624"/>
        <dbReference type="ChEBI" id="CHEBI:15377"/>
        <dbReference type="ChEBI" id="CHEBI:15378"/>
        <dbReference type="ChEBI" id="CHEBI:16526"/>
        <dbReference type="ChEBI" id="CHEBI:28938"/>
        <dbReference type="ChEBI" id="CHEBI:59891"/>
        <dbReference type="ChEBI" id="CHEBI:59894"/>
        <dbReference type="EC" id="3.5.1.110"/>
    </reaction>
</comment>
<comment type="catalytic activity">
    <reaction evidence="1">
        <text>(Z)-3-ureidoacrylate + H2O = (Z)-3-aminoacrylate + carbamate + H(+)</text>
        <dbReference type="Rhea" id="RHEA:31603"/>
        <dbReference type="ChEBI" id="CHEBI:13941"/>
        <dbReference type="ChEBI" id="CHEBI:15377"/>
        <dbReference type="ChEBI" id="CHEBI:15378"/>
        <dbReference type="ChEBI" id="CHEBI:59891"/>
        <dbReference type="ChEBI" id="CHEBI:59894"/>
    </reaction>
</comment>
<comment type="catalytic activity">
    <reaction evidence="1">
        <text>(Z)-2-methylureidoacrylate + H2O + H(+) = (Z)-2-methylaminoacrylate + NH4(+) + CO2</text>
        <dbReference type="Rhea" id="RHEA:42620"/>
        <dbReference type="ChEBI" id="CHEBI:15377"/>
        <dbReference type="ChEBI" id="CHEBI:15378"/>
        <dbReference type="ChEBI" id="CHEBI:16526"/>
        <dbReference type="ChEBI" id="CHEBI:28938"/>
        <dbReference type="ChEBI" id="CHEBI:143783"/>
        <dbReference type="ChEBI" id="CHEBI:145735"/>
        <dbReference type="EC" id="3.5.1.110"/>
    </reaction>
</comment>
<comment type="similarity">
    <text evidence="1">Belongs to the isochorismatase family. RutB subfamily.</text>
</comment>
<evidence type="ECO:0000255" key="1">
    <source>
        <dbReference type="HAMAP-Rule" id="MF_00830"/>
    </source>
</evidence>
<proteinExistence type="inferred from homology"/>
<accession>A8IAC9</accession>